<keyword id="KW-0274">FAD</keyword>
<keyword id="KW-0285">Flavoprotein</keyword>
<keyword id="KW-0496">Mitochondrion</keyword>
<keyword id="KW-1185">Reference proteome</keyword>
<keyword id="KW-0809">Transit peptide</keyword>
<keyword id="KW-0819">tRNA processing</keyword>
<dbReference type="EMBL" id="AB004539">
    <property type="protein sequence ID" value="BAA21461.1"/>
    <property type="molecule type" value="Genomic_DNA"/>
</dbReference>
<dbReference type="EMBL" id="CU329671">
    <property type="protein sequence ID" value="CAA20319.1"/>
    <property type="molecule type" value="Genomic_DNA"/>
</dbReference>
<dbReference type="PIR" id="T40172">
    <property type="entry name" value="T40172"/>
</dbReference>
<dbReference type="SMR" id="O13670"/>
<dbReference type="BioGRID" id="276943">
    <property type="interactions" value="45"/>
</dbReference>
<dbReference type="FunCoup" id="O13670">
    <property type="interactions" value="630"/>
</dbReference>
<dbReference type="IntAct" id="O13670">
    <property type="interactions" value="4"/>
</dbReference>
<dbReference type="STRING" id="284812.O13670"/>
<dbReference type="iPTMnet" id="O13670"/>
<dbReference type="PaxDb" id="4896-SPBC30B4.06c.1"/>
<dbReference type="EnsemblFungi" id="SPBC30B4.06c.1">
    <property type="protein sequence ID" value="SPBC30B4.06c.1:pep"/>
    <property type="gene ID" value="SPBC30B4.06c"/>
</dbReference>
<dbReference type="KEGG" id="spo:2540415"/>
<dbReference type="PomBase" id="SPBC30B4.06c"/>
<dbReference type="VEuPathDB" id="FungiDB:SPBC30B4.06c"/>
<dbReference type="eggNOG" id="KOG2311">
    <property type="taxonomic scope" value="Eukaryota"/>
</dbReference>
<dbReference type="HOGENOM" id="CLU_007831_2_2_1"/>
<dbReference type="InParanoid" id="O13670"/>
<dbReference type="OMA" id="CNPAMGG"/>
<dbReference type="PhylomeDB" id="O13670"/>
<dbReference type="CD-CODE" id="576F0A76">
    <property type="entry name" value="Centrosome"/>
</dbReference>
<dbReference type="PRO" id="PR:O13670"/>
<dbReference type="Proteomes" id="UP000002485">
    <property type="component" value="Chromosome II"/>
</dbReference>
<dbReference type="GO" id="GO:0005759">
    <property type="term" value="C:mitochondrial matrix"/>
    <property type="evidence" value="ECO:0000305"/>
    <property type="project" value="PomBase"/>
</dbReference>
<dbReference type="GO" id="GO:0005739">
    <property type="term" value="C:mitochondrion"/>
    <property type="evidence" value="ECO:0007005"/>
    <property type="project" value="PomBase"/>
</dbReference>
<dbReference type="GO" id="GO:0050660">
    <property type="term" value="F:flavin adenine dinucleotide binding"/>
    <property type="evidence" value="ECO:0000318"/>
    <property type="project" value="GO_Central"/>
</dbReference>
<dbReference type="GO" id="GO:0032543">
    <property type="term" value="P:mitochondrial translation"/>
    <property type="evidence" value="ECO:0000266"/>
    <property type="project" value="PomBase"/>
</dbReference>
<dbReference type="GO" id="GO:0070899">
    <property type="term" value="P:mitochondrial tRNA wobble uridine modification"/>
    <property type="evidence" value="ECO:0000318"/>
    <property type="project" value="GO_Central"/>
</dbReference>
<dbReference type="GO" id="GO:0030488">
    <property type="term" value="P:tRNA methylation"/>
    <property type="evidence" value="ECO:0000318"/>
    <property type="project" value="GO_Central"/>
</dbReference>
<dbReference type="FunFam" id="3.50.50.60:FF:000002">
    <property type="entry name" value="tRNA uridine 5-carboxymethylaminomethyl modification enzyme MnmG"/>
    <property type="match status" value="1"/>
</dbReference>
<dbReference type="Gene3D" id="3.50.50.60">
    <property type="entry name" value="FAD/NAD(P)-binding domain"/>
    <property type="match status" value="2"/>
</dbReference>
<dbReference type="Gene3D" id="1.10.150.570">
    <property type="entry name" value="GidA associated domain, C-terminal subdomain"/>
    <property type="match status" value="1"/>
</dbReference>
<dbReference type="InterPro" id="IPR036188">
    <property type="entry name" value="FAD/NAD-bd_sf"/>
</dbReference>
<dbReference type="InterPro" id="IPR049312">
    <property type="entry name" value="GIDA_C_N"/>
</dbReference>
<dbReference type="InterPro" id="IPR004416">
    <property type="entry name" value="MnmG"/>
</dbReference>
<dbReference type="InterPro" id="IPR002218">
    <property type="entry name" value="MnmG-rel"/>
</dbReference>
<dbReference type="InterPro" id="IPR020595">
    <property type="entry name" value="MnmG-rel_CS"/>
</dbReference>
<dbReference type="InterPro" id="IPR026904">
    <property type="entry name" value="MnmG_C"/>
</dbReference>
<dbReference type="InterPro" id="IPR047001">
    <property type="entry name" value="MnmG_C_subdom"/>
</dbReference>
<dbReference type="InterPro" id="IPR044920">
    <property type="entry name" value="MnmG_C_subdom_sf"/>
</dbReference>
<dbReference type="InterPro" id="IPR040131">
    <property type="entry name" value="MnmG_N"/>
</dbReference>
<dbReference type="NCBIfam" id="TIGR00136">
    <property type="entry name" value="mnmG_gidA"/>
    <property type="match status" value="1"/>
</dbReference>
<dbReference type="PANTHER" id="PTHR11806">
    <property type="entry name" value="GLUCOSE INHIBITED DIVISION PROTEIN A"/>
    <property type="match status" value="1"/>
</dbReference>
<dbReference type="PANTHER" id="PTHR11806:SF0">
    <property type="entry name" value="PROTEIN MTO1 HOMOLOG, MITOCHONDRIAL"/>
    <property type="match status" value="1"/>
</dbReference>
<dbReference type="Pfam" id="PF01134">
    <property type="entry name" value="GIDA"/>
    <property type="match status" value="1"/>
</dbReference>
<dbReference type="Pfam" id="PF21680">
    <property type="entry name" value="GIDA_C_1st"/>
    <property type="match status" value="1"/>
</dbReference>
<dbReference type="Pfam" id="PF13932">
    <property type="entry name" value="SAM_GIDA_C"/>
    <property type="match status" value="1"/>
</dbReference>
<dbReference type="SMART" id="SM01228">
    <property type="entry name" value="GIDA_assoc_3"/>
    <property type="match status" value="1"/>
</dbReference>
<dbReference type="SUPFAM" id="SSF51905">
    <property type="entry name" value="FAD/NAD(P)-binding domain"/>
    <property type="match status" value="1"/>
</dbReference>
<dbReference type="PROSITE" id="PS01280">
    <property type="entry name" value="GIDA_1"/>
    <property type="match status" value="1"/>
</dbReference>
<dbReference type="PROSITE" id="PS01281">
    <property type="entry name" value="GIDA_2"/>
    <property type="match status" value="1"/>
</dbReference>
<gene>
    <name type="primary">mto1</name>
    <name type="ORF">pi079</name>
    <name type="ORF">SPBC30B4.06c</name>
</gene>
<sequence>MFRTTKRYFCTSFNRRKNVVVIGGGHAGVEAAAAASRLGAKTTLLTKSFDNIGQMSCNPAFGGIGKGTLMREIDALGGVVSGVCDESAIQFHMLNRSNGPAVWSPRAQMDRSVFKKNMQKTISTYRKNLQVREGAAVSINVLTEDDGKQVCDSIVLEDGTAIPASCIVITTGTFLGGQINVGLTQLAAGRYGERPSLPLSKCLSNLGFKMGRLKTGTPPRLSSPINISKMTEQTGDEIPETFSFLNLERDFSPALPQRSCYRTYTTELTHEIVRKNLAFAPHMLAGDILSPRYCPSLEAKVTRFPHKARHLIWLEPEGLDPNSWWYPNGLSNSMPEEIQHNIIRSIPGLENCNIVRPAYGVMYDYVIPTQLKATLETKKIQGLYLAGQINGTTGYEEAAAQGILAGLNAGLSALGREPVDIPRNTALLGVMVDDLITKGVKEPYRVFTSRSEYRLTTRADNADLRLTPLAQSIGLLDDQTHWESFQRTKSLLDFSNKIAKEFILSPQQWSKLGMPIPNDGKYRSAWDLLSFTNLDLFCVISCIPKLKDIPKRVLQRLIIEGKYTYYIKRQGTQNKQLNCRDESTVIPSDFDFDTLHSVSAEELMLLKTIRPATIGQLKRIQGIKPGTIIRLLRHTYYNPAKEAWLRKVYMPMYDMHSSEENQSTNL</sequence>
<comment type="function">
    <text evidence="3">Component of the MSS1-MTO1 complex that catalyzes the 5-carboxymethylaminomethyluridine (cmnm(5)U) modification at the 34th wobble position (U34) of mitochondrial tRNAs.</text>
</comment>
<comment type="cofactor">
    <cofactor evidence="2">
        <name>FAD</name>
        <dbReference type="ChEBI" id="CHEBI:57692"/>
    </cofactor>
</comment>
<comment type="interaction">
    <interactant intactId="EBI-1562568">
        <id>O13670</id>
    </interactant>
    <interactant intactId="EBI-1562556">
        <id>Q9USP7</id>
        <label>mto2</label>
    </interactant>
    <organismsDiffer>false</organismsDiffer>
    <experiments>11</experiments>
</comment>
<comment type="subcellular location">
    <subcellularLocation>
        <location evidence="1">Mitochondrion</location>
    </subcellularLocation>
</comment>
<comment type="similarity">
    <text evidence="5">Belongs to the MnmG family.</text>
</comment>
<feature type="transit peptide" description="Mitochondrion" evidence="4">
    <location>
        <begin position="1"/>
        <end position="16"/>
    </location>
</feature>
<feature type="chain" id="PRO_0000042790" description="Protein MTO1 homolog, mitochondrial">
    <location>
        <begin position="17"/>
        <end position="666"/>
    </location>
</feature>
<feature type="binding site" evidence="2">
    <location>
        <begin position="23"/>
        <end position="28"/>
    </location>
    <ligand>
        <name>FAD</name>
        <dbReference type="ChEBI" id="CHEBI:57692"/>
    </ligand>
</feature>
<reference key="1">
    <citation type="journal article" date="2000" name="Yeast">
        <title>A 38 kb segment containing the cdc2 gene from the left arm of fission yeast chromosome II: sequence analysis and characterization of the genomic DNA and cDNAs encoded on the segment.</title>
        <authorList>
            <person name="Machida M."/>
            <person name="Yamazaki S."/>
            <person name="Kunihiro S."/>
            <person name="Tanaka T."/>
            <person name="Kushida N."/>
            <person name="Jinno K."/>
            <person name="Haikawa Y."/>
            <person name="Yamazaki J."/>
            <person name="Yamamoto S."/>
            <person name="Sekine M."/>
            <person name="Oguchi A."/>
            <person name="Nagai Y."/>
            <person name="Sakai M."/>
            <person name="Aoki K."/>
            <person name="Ogura K."/>
            <person name="Kudoh Y."/>
            <person name="Kikuchi H."/>
            <person name="Zhang M.Q."/>
            <person name="Yanagida M."/>
        </authorList>
    </citation>
    <scope>NUCLEOTIDE SEQUENCE [LARGE SCALE GENOMIC DNA]</scope>
    <source>
        <strain>972 / ATCC 24843</strain>
    </source>
</reference>
<reference key="2">
    <citation type="journal article" date="2002" name="Nature">
        <title>The genome sequence of Schizosaccharomyces pombe.</title>
        <authorList>
            <person name="Wood V."/>
            <person name="Gwilliam R."/>
            <person name="Rajandream M.A."/>
            <person name="Lyne M.H."/>
            <person name="Lyne R."/>
            <person name="Stewart A."/>
            <person name="Sgouros J.G."/>
            <person name="Peat N."/>
            <person name="Hayles J."/>
            <person name="Baker S.G."/>
            <person name="Basham D."/>
            <person name="Bowman S."/>
            <person name="Brooks K."/>
            <person name="Brown D."/>
            <person name="Brown S."/>
            <person name="Chillingworth T."/>
            <person name="Churcher C.M."/>
            <person name="Collins M."/>
            <person name="Connor R."/>
            <person name="Cronin A."/>
            <person name="Davis P."/>
            <person name="Feltwell T."/>
            <person name="Fraser A."/>
            <person name="Gentles S."/>
            <person name="Goble A."/>
            <person name="Hamlin N."/>
            <person name="Harris D.E."/>
            <person name="Hidalgo J."/>
            <person name="Hodgson G."/>
            <person name="Holroyd S."/>
            <person name="Hornsby T."/>
            <person name="Howarth S."/>
            <person name="Huckle E.J."/>
            <person name="Hunt S."/>
            <person name="Jagels K."/>
            <person name="James K.D."/>
            <person name="Jones L."/>
            <person name="Jones M."/>
            <person name="Leather S."/>
            <person name="McDonald S."/>
            <person name="McLean J."/>
            <person name="Mooney P."/>
            <person name="Moule S."/>
            <person name="Mungall K.L."/>
            <person name="Murphy L.D."/>
            <person name="Niblett D."/>
            <person name="Odell C."/>
            <person name="Oliver K."/>
            <person name="O'Neil S."/>
            <person name="Pearson D."/>
            <person name="Quail M.A."/>
            <person name="Rabbinowitsch E."/>
            <person name="Rutherford K.M."/>
            <person name="Rutter S."/>
            <person name="Saunders D."/>
            <person name="Seeger K."/>
            <person name="Sharp S."/>
            <person name="Skelton J."/>
            <person name="Simmonds M.N."/>
            <person name="Squares R."/>
            <person name="Squares S."/>
            <person name="Stevens K."/>
            <person name="Taylor K."/>
            <person name="Taylor R.G."/>
            <person name="Tivey A."/>
            <person name="Walsh S.V."/>
            <person name="Warren T."/>
            <person name="Whitehead S."/>
            <person name="Woodward J.R."/>
            <person name="Volckaert G."/>
            <person name="Aert R."/>
            <person name="Robben J."/>
            <person name="Grymonprez B."/>
            <person name="Weltjens I."/>
            <person name="Vanstreels E."/>
            <person name="Rieger M."/>
            <person name="Schaefer M."/>
            <person name="Mueller-Auer S."/>
            <person name="Gabel C."/>
            <person name="Fuchs M."/>
            <person name="Duesterhoeft A."/>
            <person name="Fritzc C."/>
            <person name="Holzer E."/>
            <person name="Moestl D."/>
            <person name="Hilbert H."/>
            <person name="Borzym K."/>
            <person name="Langer I."/>
            <person name="Beck A."/>
            <person name="Lehrach H."/>
            <person name="Reinhardt R."/>
            <person name="Pohl T.M."/>
            <person name="Eger P."/>
            <person name="Zimmermann W."/>
            <person name="Wedler H."/>
            <person name="Wambutt R."/>
            <person name="Purnelle B."/>
            <person name="Goffeau A."/>
            <person name="Cadieu E."/>
            <person name="Dreano S."/>
            <person name="Gloux S."/>
            <person name="Lelaure V."/>
            <person name="Mottier S."/>
            <person name="Galibert F."/>
            <person name="Aves S.J."/>
            <person name="Xiang Z."/>
            <person name="Hunt C."/>
            <person name="Moore K."/>
            <person name="Hurst S.M."/>
            <person name="Lucas M."/>
            <person name="Rochet M."/>
            <person name="Gaillardin C."/>
            <person name="Tallada V.A."/>
            <person name="Garzon A."/>
            <person name="Thode G."/>
            <person name="Daga R.R."/>
            <person name="Cruzado L."/>
            <person name="Jimenez J."/>
            <person name="Sanchez M."/>
            <person name="del Rey F."/>
            <person name="Benito J."/>
            <person name="Dominguez A."/>
            <person name="Revuelta J.L."/>
            <person name="Moreno S."/>
            <person name="Armstrong J."/>
            <person name="Forsburg S.L."/>
            <person name="Cerutti L."/>
            <person name="Lowe T."/>
            <person name="McCombie W.R."/>
            <person name="Paulsen I."/>
            <person name="Potashkin J."/>
            <person name="Shpakovski G.V."/>
            <person name="Ussery D."/>
            <person name="Barrell B.G."/>
            <person name="Nurse P."/>
        </authorList>
    </citation>
    <scope>NUCLEOTIDE SEQUENCE [LARGE SCALE GENOMIC DNA]</scope>
    <source>
        <strain>972 / ATCC 24843</strain>
    </source>
</reference>
<accession>O13670</accession>
<proteinExistence type="evidence at protein level"/>
<evidence type="ECO:0000250" key="1"/>
<evidence type="ECO:0000250" key="2">
    <source>
        <dbReference type="UniProtKB" id="O66962"/>
    </source>
</evidence>
<evidence type="ECO:0000250" key="3">
    <source>
        <dbReference type="UniProtKB" id="P53070"/>
    </source>
</evidence>
<evidence type="ECO:0000255" key="4"/>
<evidence type="ECO:0000305" key="5"/>
<name>MTO1_SCHPO</name>
<organism>
    <name type="scientific">Schizosaccharomyces pombe (strain 972 / ATCC 24843)</name>
    <name type="common">Fission yeast</name>
    <dbReference type="NCBI Taxonomy" id="284812"/>
    <lineage>
        <taxon>Eukaryota</taxon>
        <taxon>Fungi</taxon>
        <taxon>Dikarya</taxon>
        <taxon>Ascomycota</taxon>
        <taxon>Taphrinomycotina</taxon>
        <taxon>Schizosaccharomycetes</taxon>
        <taxon>Schizosaccharomycetales</taxon>
        <taxon>Schizosaccharomycetaceae</taxon>
        <taxon>Schizosaccharomyces</taxon>
    </lineage>
</organism>
<protein>
    <recommendedName>
        <fullName>Protein MTO1 homolog, mitochondrial</fullName>
    </recommendedName>
</protein>